<gene>
    <name evidence="3" type="primary">tacT2</name>
</gene>
<comment type="function">
    <text evidence="2">Toxic component of a type II toxin-antitoxin (TA) system. Acetylates tRNA and inhibits translation. Acetylates mainly Gly and Ile/Leu in vitro. Overexpression during the lag phase of a tacA2-tacT2 deletion strain leads to a 100-fold increase in persister cells in the presence of cefotaxime and a non-growth state in the absence of antibiotic. This protein, which has a single amino acid compared to S.typhimurium strain 14028s (Lys-29 is Glu in 14028s), produces 100-fold more persister cells, has much higher acetylation activity and binds tRNA much better. Persister cell formation and the growth defect are neutralized by cognate antitoxin TacA2.</text>
</comment>
<comment type="function">
    <text evidence="1">The TacA2-TacT2 complex both represses and derepresses expression of its own operon.</text>
</comment>
<comment type="catalytic activity">
    <reaction evidence="2">
        <text>glycyl-tRNA(Gly) + acetyl-CoA = N-acetylglycyl-tRNA(Gly) + CoA + H(+)</text>
        <dbReference type="Rhea" id="RHEA:81867"/>
        <dbReference type="Rhea" id="RHEA-COMP:9683"/>
        <dbReference type="Rhea" id="RHEA-COMP:19766"/>
        <dbReference type="ChEBI" id="CHEBI:15378"/>
        <dbReference type="ChEBI" id="CHEBI:57287"/>
        <dbReference type="ChEBI" id="CHEBI:57288"/>
        <dbReference type="ChEBI" id="CHEBI:78522"/>
        <dbReference type="ChEBI" id="CHEBI:232036"/>
    </reaction>
</comment>
<comment type="catalytic activity">
    <reaction evidence="2">
        <text>L-isoleucyl-tRNA(Ile) + acetyl-CoA = N-acetyl-L-isoleucyl-tRNA(Ile) + CoA + H(+)</text>
        <dbReference type="Rhea" id="RHEA:81983"/>
        <dbReference type="Rhea" id="RHEA-COMP:9695"/>
        <dbReference type="Rhea" id="RHEA-COMP:19780"/>
        <dbReference type="ChEBI" id="CHEBI:15378"/>
        <dbReference type="ChEBI" id="CHEBI:57287"/>
        <dbReference type="ChEBI" id="CHEBI:57288"/>
        <dbReference type="ChEBI" id="CHEBI:78528"/>
        <dbReference type="ChEBI" id="CHEBI:232037"/>
    </reaction>
</comment>
<comment type="catalytic activity">
    <reaction evidence="2">
        <text>L-leucyl-tRNA(Leu) + acetyl-CoA = N-acetyl-L-leucyl-tRNA(Leu) + CoA + H(+)</text>
        <dbReference type="Rhea" id="RHEA:82051"/>
        <dbReference type="Rhea" id="RHEA-COMP:9622"/>
        <dbReference type="Rhea" id="RHEA-COMP:19802"/>
        <dbReference type="ChEBI" id="CHEBI:15378"/>
        <dbReference type="ChEBI" id="CHEBI:57287"/>
        <dbReference type="ChEBI" id="CHEBI:57288"/>
        <dbReference type="ChEBI" id="CHEBI:78494"/>
        <dbReference type="ChEBI" id="CHEBI:232065"/>
    </reaction>
</comment>
<comment type="biophysicochemical properties">
    <phDependence>
        <text evidence="2">Optimum pH is 6.5-7.5.</text>
    </phDependence>
</comment>
<comment type="subunit">
    <text evidence="1 2">Homodimer (By similarity). Forms a complex with cognate antitoxin TacA2 (PubMed:29777131).</text>
</comment>
<comment type="miscellaneous">
    <text evidence="3">There are 3 TacA-TacT systems in this strain.</text>
</comment>
<comment type="similarity">
    <text evidence="4">Belongs to the acetyltransferase family. GNAT subfamily.</text>
</comment>
<evidence type="ECO:0000250" key="1">
    <source>
        <dbReference type="UniProtKB" id="A0A0F6B5X4"/>
    </source>
</evidence>
<evidence type="ECO:0000269" key="2">
    <source>
    </source>
</evidence>
<evidence type="ECO:0000303" key="3">
    <source>
    </source>
</evidence>
<evidence type="ECO:0000305" key="4"/>
<evidence type="ECO:0000305" key="5">
    <source>
    </source>
</evidence>
<feature type="chain" id="PRO_0000461700" description="tRNA-acetylating toxin 2">
    <location>
        <begin position="1"/>
        <end position="163"/>
    </location>
</feature>
<feature type="active site" evidence="5">
    <location>
        <position position="137"/>
    </location>
</feature>
<feature type="mutagenesis site" description="Loss of toxicity." evidence="2">
    <original>R</original>
    <variation>G</variation>
    <location>
        <position position="88"/>
    </location>
</feature>
<feature type="mutagenesis site" description="Loss of toxicity." evidence="2">
    <original>Y</original>
    <variation>F</variation>
    <location>
        <position position="137"/>
    </location>
</feature>
<keyword id="KW-0012">Acyltransferase</keyword>
<keyword id="KW-0678">Repressor</keyword>
<keyword id="KW-0694">RNA-binding</keyword>
<keyword id="KW-1277">Toxin-antitoxin system</keyword>
<keyword id="KW-0804">Transcription</keyword>
<keyword id="KW-0805">Transcription regulation</keyword>
<keyword id="KW-0808">Transferase</keyword>
<keyword id="KW-0810">Translation regulation</keyword>
<keyword id="KW-0820">tRNA-binding</keyword>
<reference key="1">
    <citation type="journal article" date="2018" name="Nat. Commun.">
        <title>Activity of acetyltransferase toxins involved in Salmonella persister formation during macrophage infection.</title>
        <authorList>
            <person name="Rycroft J.A."/>
            <person name="Gollan B."/>
            <person name="Grabe G.J."/>
            <person name="Hall A."/>
            <person name="Cheverton A.M."/>
            <person name="Larrouy-Maumus G."/>
            <person name="Hare S.A."/>
            <person name="Helaine S."/>
        </authorList>
    </citation>
    <scope>NUCLEOTIDE SEQUENCE [GENOMIC DNA]</scope>
    <scope>FUNCTION AS A TOXIN</scope>
    <scope>POSSIBLE ACTIVE SITE</scope>
    <scope>BIOPHYSICOCHEMICAL PROPERTIES</scope>
    <scope>SUBUNIT</scope>
    <scope>TRNA-BINDING</scope>
    <scope>MUTAGENESIS OF ARG-88 AND TYR-137</scope>
    <source>
        <strain>NCTC 13349</strain>
    </source>
</reference>
<accession>P0DXX5</accession>
<dbReference type="EC" id="2.3.1.-" evidence="5"/>
<dbReference type="RefSeq" id="WP_000626100.1">
    <property type="nucleotide sequence ID" value="NZ_WIDC01000200.1"/>
</dbReference>
<dbReference type="SMR" id="P0DXX5"/>
<dbReference type="GO" id="GO:0016747">
    <property type="term" value="F:acyltransferase activity, transferring groups other than amino-acyl groups"/>
    <property type="evidence" value="ECO:0007669"/>
    <property type="project" value="InterPro"/>
</dbReference>
<dbReference type="GO" id="GO:0000049">
    <property type="term" value="F:tRNA binding"/>
    <property type="evidence" value="ECO:0007669"/>
    <property type="project" value="UniProtKB-KW"/>
</dbReference>
<dbReference type="GO" id="GO:0006417">
    <property type="term" value="P:regulation of translation"/>
    <property type="evidence" value="ECO:0007669"/>
    <property type="project" value="UniProtKB-KW"/>
</dbReference>
<dbReference type="CDD" id="cd04301">
    <property type="entry name" value="NAT_SF"/>
    <property type="match status" value="1"/>
</dbReference>
<dbReference type="Gene3D" id="3.40.630.30">
    <property type="match status" value="1"/>
</dbReference>
<dbReference type="InterPro" id="IPR016181">
    <property type="entry name" value="Acyl_CoA_acyltransferase"/>
</dbReference>
<dbReference type="InterPro" id="IPR000182">
    <property type="entry name" value="GNAT_dom"/>
</dbReference>
<dbReference type="PANTHER" id="PTHR36449:SF1">
    <property type="entry name" value="ACETYLTRANSFERASE"/>
    <property type="match status" value="1"/>
</dbReference>
<dbReference type="PANTHER" id="PTHR36449">
    <property type="entry name" value="ACETYLTRANSFERASE-RELATED"/>
    <property type="match status" value="1"/>
</dbReference>
<dbReference type="Pfam" id="PF13508">
    <property type="entry name" value="Acetyltransf_7"/>
    <property type="match status" value="1"/>
</dbReference>
<dbReference type="SUPFAM" id="SSF55729">
    <property type="entry name" value="Acyl-CoA N-acyltransferases (Nat)"/>
    <property type="match status" value="1"/>
</dbReference>
<sequence length="163" mass="17645">MISTPEPLHAGHILTPFCCGVDSIDNWLKQRAMKNQTTGASRTFVCCGSDSNVLAYYSLASSAVTTNTSPGRFRRNMPDPIPVVVLGRLAVDKSLHGQGVARALVRDAGLRVIQVAETIGIRGMLVHALSDEAREFYQRVGFVPSPMDPMMLMVTLGDLVESV</sequence>
<name>TACT2_SALEN</name>
<protein>
    <recommendedName>
        <fullName evidence="4">tRNA-acetylating toxin 2</fullName>
        <shortName evidence="3">TacT2</shortName>
        <ecNumber evidence="5">2.3.1.-</ecNumber>
    </recommendedName>
</protein>
<proteinExistence type="evidence at protein level"/>
<organism>
    <name type="scientific">Salmonella enteritidis</name>
    <dbReference type="NCBI Taxonomy" id="149539"/>
    <lineage>
        <taxon>Bacteria</taxon>
        <taxon>Pseudomonadati</taxon>
        <taxon>Pseudomonadota</taxon>
        <taxon>Gammaproteobacteria</taxon>
        <taxon>Enterobacterales</taxon>
        <taxon>Enterobacteriaceae</taxon>
        <taxon>Salmonella</taxon>
    </lineage>
</organism>